<keyword id="KW-0028">Amino-acid biosynthesis</keyword>
<keyword id="KW-0057">Aromatic amino acid biosynthesis</keyword>
<keyword id="KW-0328">Glycosyltransferase</keyword>
<keyword id="KW-0460">Magnesium</keyword>
<keyword id="KW-0479">Metal-binding</keyword>
<keyword id="KW-0808">Transferase</keyword>
<keyword id="KW-0822">Tryptophan biosynthesis</keyword>
<protein>
    <recommendedName>
        <fullName evidence="1">Anthranilate phosphoribosyltransferase</fullName>
        <ecNumber evidence="1">2.4.2.18</ecNumber>
    </recommendedName>
</protein>
<proteinExistence type="inferred from homology"/>
<comment type="function">
    <text evidence="1">Catalyzes the transfer of the phosphoribosyl group of 5-phosphorylribose-1-pyrophosphate (PRPP) to anthranilate to yield N-(5'-phosphoribosyl)-anthranilate (PRA).</text>
</comment>
<comment type="catalytic activity">
    <reaction evidence="1">
        <text>N-(5-phospho-beta-D-ribosyl)anthranilate + diphosphate = 5-phospho-alpha-D-ribose 1-diphosphate + anthranilate</text>
        <dbReference type="Rhea" id="RHEA:11768"/>
        <dbReference type="ChEBI" id="CHEBI:16567"/>
        <dbReference type="ChEBI" id="CHEBI:18277"/>
        <dbReference type="ChEBI" id="CHEBI:33019"/>
        <dbReference type="ChEBI" id="CHEBI:58017"/>
        <dbReference type="EC" id="2.4.2.18"/>
    </reaction>
</comment>
<comment type="cofactor">
    <cofactor evidence="1">
        <name>Mg(2+)</name>
        <dbReference type="ChEBI" id="CHEBI:18420"/>
    </cofactor>
    <text evidence="1">Binds 2 magnesium ions per monomer.</text>
</comment>
<comment type="pathway">
    <text evidence="1">Amino-acid biosynthesis; L-tryptophan biosynthesis; L-tryptophan from chorismate: step 2/5.</text>
</comment>
<comment type="subunit">
    <text evidence="1">Homodimer.</text>
</comment>
<comment type="similarity">
    <text evidence="1">Belongs to the anthranilate phosphoribosyltransferase family.</text>
</comment>
<name>TRPD_BURTA</name>
<accession>Q2SUI1</accession>
<sequence>MTITPQEALQRTIEHREIFHDEMLHLMRLIMRGDMSPVMAAAIITGLRVKKETIGEITAAATVMREFARHVEVEDNANFVDIVGTGGDGSHTFNISTATMFVAAAAGAKVAKHGNRGVSSKSGSADVLEALGVNIDLQPEQVAASIAETGMGFMFAPNHHPAMRNIAPVRRELGVRTIFNILGPLTNPADAPNQLMGVFHPDLVGIQVRVMQRLGARHVLVVYGKDGMDEVSLGAATLVGELRDGEVREYEIHPEDFGMQMVSNRTLKVENAGESRVMLLEALGNKPGVAREIVTLNAGTALYSANVAGSIADGIQLAREAIASGRAREKVDELARFTQQFKR</sequence>
<dbReference type="EC" id="2.4.2.18" evidence="1"/>
<dbReference type="EMBL" id="CP000086">
    <property type="protein sequence ID" value="ABC38160.1"/>
    <property type="molecule type" value="Genomic_DNA"/>
</dbReference>
<dbReference type="RefSeq" id="WP_009888706.1">
    <property type="nucleotide sequence ID" value="NZ_CP008786.1"/>
</dbReference>
<dbReference type="SMR" id="Q2SUI1"/>
<dbReference type="GeneID" id="45122601"/>
<dbReference type="KEGG" id="bte:BTH_I2911"/>
<dbReference type="HOGENOM" id="CLU_034315_2_1_4"/>
<dbReference type="UniPathway" id="UPA00035">
    <property type="reaction ID" value="UER00041"/>
</dbReference>
<dbReference type="Proteomes" id="UP000001930">
    <property type="component" value="Chromosome I"/>
</dbReference>
<dbReference type="GO" id="GO:0005829">
    <property type="term" value="C:cytosol"/>
    <property type="evidence" value="ECO:0007669"/>
    <property type="project" value="TreeGrafter"/>
</dbReference>
<dbReference type="GO" id="GO:0004048">
    <property type="term" value="F:anthranilate phosphoribosyltransferase activity"/>
    <property type="evidence" value="ECO:0007669"/>
    <property type="project" value="UniProtKB-UniRule"/>
</dbReference>
<dbReference type="GO" id="GO:0000287">
    <property type="term" value="F:magnesium ion binding"/>
    <property type="evidence" value="ECO:0007669"/>
    <property type="project" value="UniProtKB-UniRule"/>
</dbReference>
<dbReference type="GO" id="GO:0000162">
    <property type="term" value="P:L-tryptophan biosynthetic process"/>
    <property type="evidence" value="ECO:0007669"/>
    <property type="project" value="UniProtKB-UniRule"/>
</dbReference>
<dbReference type="FunFam" id="1.20.970.10:FF:000006">
    <property type="entry name" value="Anthranilate phosphoribosyltransferase"/>
    <property type="match status" value="1"/>
</dbReference>
<dbReference type="FunFam" id="3.40.1030.10:FF:000002">
    <property type="entry name" value="Anthranilate phosphoribosyltransferase"/>
    <property type="match status" value="1"/>
</dbReference>
<dbReference type="Gene3D" id="3.40.1030.10">
    <property type="entry name" value="Nucleoside phosphorylase/phosphoribosyltransferase catalytic domain"/>
    <property type="match status" value="1"/>
</dbReference>
<dbReference type="Gene3D" id="1.20.970.10">
    <property type="entry name" value="Transferase, Pyrimidine Nucleoside Phosphorylase, Chain C"/>
    <property type="match status" value="1"/>
</dbReference>
<dbReference type="HAMAP" id="MF_00211">
    <property type="entry name" value="TrpD"/>
    <property type="match status" value="1"/>
</dbReference>
<dbReference type="InterPro" id="IPR005940">
    <property type="entry name" value="Anthranilate_Pribosyl_Tfrase"/>
</dbReference>
<dbReference type="InterPro" id="IPR000312">
    <property type="entry name" value="Glycosyl_Trfase_fam3"/>
</dbReference>
<dbReference type="InterPro" id="IPR017459">
    <property type="entry name" value="Glycosyl_Trfase_fam3_N_dom"/>
</dbReference>
<dbReference type="InterPro" id="IPR036320">
    <property type="entry name" value="Glycosyl_Trfase_fam3_N_dom_sf"/>
</dbReference>
<dbReference type="InterPro" id="IPR035902">
    <property type="entry name" value="Nuc_phospho_transferase"/>
</dbReference>
<dbReference type="NCBIfam" id="TIGR01245">
    <property type="entry name" value="trpD"/>
    <property type="match status" value="1"/>
</dbReference>
<dbReference type="PANTHER" id="PTHR43285">
    <property type="entry name" value="ANTHRANILATE PHOSPHORIBOSYLTRANSFERASE"/>
    <property type="match status" value="1"/>
</dbReference>
<dbReference type="PANTHER" id="PTHR43285:SF2">
    <property type="entry name" value="ANTHRANILATE PHOSPHORIBOSYLTRANSFERASE"/>
    <property type="match status" value="1"/>
</dbReference>
<dbReference type="Pfam" id="PF02885">
    <property type="entry name" value="Glycos_trans_3N"/>
    <property type="match status" value="1"/>
</dbReference>
<dbReference type="Pfam" id="PF00591">
    <property type="entry name" value="Glycos_transf_3"/>
    <property type="match status" value="1"/>
</dbReference>
<dbReference type="SUPFAM" id="SSF52418">
    <property type="entry name" value="Nucleoside phosphorylase/phosphoribosyltransferase catalytic domain"/>
    <property type="match status" value="1"/>
</dbReference>
<dbReference type="SUPFAM" id="SSF47648">
    <property type="entry name" value="Nucleoside phosphorylase/phosphoribosyltransferase N-terminal domain"/>
    <property type="match status" value="1"/>
</dbReference>
<evidence type="ECO:0000255" key="1">
    <source>
        <dbReference type="HAMAP-Rule" id="MF_00211"/>
    </source>
</evidence>
<feature type="chain" id="PRO_1000043001" description="Anthranilate phosphoribosyltransferase">
    <location>
        <begin position="1"/>
        <end position="343"/>
    </location>
</feature>
<feature type="binding site" evidence="1">
    <location>
        <position position="84"/>
    </location>
    <ligand>
        <name>5-phospho-alpha-D-ribose 1-diphosphate</name>
        <dbReference type="ChEBI" id="CHEBI:58017"/>
    </ligand>
</feature>
<feature type="binding site" evidence="1">
    <location>
        <position position="84"/>
    </location>
    <ligand>
        <name>anthranilate</name>
        <dbReference type="ChEBI" id="CHEBI:16567"/>
        <label>1</label>
    </ligand>
</feature>
<feature type="binding site" evidence="1">
    <location>
        <begin position="87"/>
        <end position="88"/>
    </location>
    <ligand>
        <name>5-phospho-alpha-D-ribose 1-diphosphate</name>
        <dbReference type="ChEBI" id="CHEBI:58017"/>
    </ligand>
</feature>
<feature type="binding site" evidence="1">
    <location>
        <position position="92"/>
    </location>
    <ligand>
        <name>5-phospho-alpha-D-ribose 1-diphosphate</name>
        <dbReference type="ChEBI" id="CHEBI:58017"/>
    </ligand>
</feature>
<feature type="binding site" evidence="1">
    <location>
        <begin position="94"/>
        <end position="97"/>
    </location>
    <ligand>
        <name>5-phospho-alpha-D-ribose 1-diphosphate</name>
        <dbReference type="ChEBI" id="CHEBI:58017"/>
    </ligand>
</feature>
<feature type="binding site" evidence="1">
    <location>
        <position position="96"/>
    </location>
    <ligand>
        <name>Mg(2+)</name>
        <dbReference type="ChEBI" id="CHEBI:18420"/>
        <label>1</label>
    </ligand>
</feature>
<feature type="binding site" evidence="1">
    <location>
        <begin position="112"/>
        <end position="120"/>
    </location>
    <ligand>
        <name>5-phospho-alpha-D-ribose 1-diphosphate</name>
        <dbReference type="ChEBI" id="CHEBI:58017"/>
    </ligand>
</feature>
<feature type="binding site" evidence="1">
    <location>
        <position position="115"/>
    </location>
    <ligand>
        <name>anthranilate</name>
        <dbReference type="ChEBI" id="CHEBI:16567"/>
        <label>1</label>
    </ligand>
</feature>
<feature type="binding site" evidence="1">
    <location>
        <position position="124"/>
    </location>
    <ligand>
        <name>5-phospho-alpha-D-ribose 1-diphosphate</name>
        <dbReference type="ChEBI" id="CHEBI:58017"/>
    </ligand>
</feature>
<feature type="binding site" evidence="1">
    <location>
        <position position="170"/>
    </location>
    <ligand>
        <name>anthranilate</name>
        <dbReference type="ChEBI" id="CHEBI:16567"/>
        <label>2</label>
    </ligand>
</feature>
<feature type="binding site" evidence="1">
    <location>
        <position position="229"/>
    </location>
    <ligand>
        <name>Mg(2+)</name>
        <dbReference type="ChEBI" id="CHEBI:18420"/>
        <label>2</label>
    </ligand>
</feature>
<feature type="binding site" evidence="1">
    <location>
        <position position="230"/>
    </location>
    <ligand>
        <name>Mg(2+)</name>
        <dbReference type="ChEBI" id="CHEBI:18420"/>
        <label>1</label>
    </ligand>
</feature>
<feature type="binding site" evidence="1">
    <location>
        <position position="230"/>
    </location>
    <ligand>
        <name>Mg(2+)</name>
        <dbReference type="ChEBI" id="CHEBI:18420"/>
        <label>2</label>
    </ligand>
</feature>
<organism>
    <name type="scientific">Burkholderia thailandensis (strain ATCC 700388 / DSM 13276 / CCUG 48851 / CIP 106301 / E264)</name>
    <dbReference type="NCBI Taxonomy" id="271848"/>
    <lineage>
        <taxon>Bacteria</taxon>
        <taxon>Pseudomonadati</taxon>
        <taxon>Pseudomonadota</taxon>
        <taxon>Betaproteobacteria</taxon>
        <taxon>Burkholderiales</taxon>
        <taxon>Burkholderiaceae</taxon>
        <taxon>Burkholderia</taxon>
        <taxon>pseudomallei group</taxon>
    </lineage>
</organism>
<gene>
    <name evidence="1" type="primary">trpD</name>
    <name type="ordered locus">BTH_I2911</name>
</gene>
<reference key="1">
    <citation type="journal article" date="2005" name="BMC Genomics">
        <title>Bacterial genome adaptation to niches: divergence of the potential virulence genes in three Burkholderia species of different survival strategies.</title>
        <authorList>
            <person name="Kim H.S."/>
            <person name="Schell M.A."/>
            <person name="Yu Y."/>
            <person name="Ulrich R.L."/>
            <person name="Sarria S.H."/>
            <person name="Nierman W.C."/>
            <person name="DeShazer D."/>
        </authorList>
    </citation>
    <scope>NUCLEOTIDE SEQUENCE [LARGE SCALE GENOMIC DNA]</scope>
    <source>
        <strain>ATCC 700388 / DSM 13276 / CCUG 48851 / CIP 106301 / E264</strain>
    </source>
</reference>